<dbReference type="EC" id="2.7.1.170" evidence="1"/>
<dbReference type="EMBL" id="CP000001">
    <property type="protein sequence ID" value="AAU18042.1"/>
    <property type="molecule type" value="Genomic_DNA"/>
</dbReference>
<dbReference type="RefSeq" id="WP_000274999.1">
    <property type="nucleotide sequence ID" value="NC_006274.1"/>
</dbReference>
<dbReference type="SMR" id="Q63BB2"/>
<dbReference type="KEGG" id="bcz:BCE33L2214"/>
<dbReference type="PATRIC" id="fig|288681.22.peg.3291"/>
<dbReference type="UniPathway" id="UPA00343"/>
<dbReference type="UniPathway" id="UPA00544"/>
<dbReference type="Proteomes" id="UP000002612">
    <property type="component" value="Chromosome"/>
</dbReference>
<dbReference type="GO" id="GO:0005524">
    <property type="term" value="F:ATP binding"/>
    <property type="evidence" value="ECO:0007669"/>
    <property type="project" value="UniProtKB-UniRule"/>
</dbReference>
<dbReference type="GO" id="GO:0016301">
    <property type="term" value="F:kinase activity"/>
    <property type="evidence" value="ECO:0007669"/>
    <property type="project" value="UniProtKB-KW"/>
</dbReference>
<dbReference type="GO" id="GO:0016773">
    <property type="term" value="F:phosphotransferase activity, alcohol group as acceptor"/>
    <property type="evidence" value="ECO:0007669"/>
    <property type="project" value="UniProtKB-UniRule"/>
</dbReference>
<dbReference type="GO" id="GO:0097175">
    <property type="term" value="P:1,6-anhydro-N-acetyl-beta-muramic acid catabolic process"/>
    <property type="evidence" value="ECO:0007669"/>
    <property type="project" value="UniProtKB-UniRule"/>
</dbReference>
<dbReference type="GO" id="GO:0006040">
    <property type="term" value="P:amino sugar metabolic process"/>
    <property type="evidence" value="ECO:0007669"/>
    <property type="project" value="InterPro"/>
</dbReference>
<dbReference type="GO" id="GO:0009254">
    <property type="term" value="P:peptidoglycan turnover"/>
    <property type="evidence" value="ECO:0007669"/>
    <property type="project" value="UniProtKB-UniRule"/>
</dbReference>
<dbReference type="CDD" id="cd24050">
    <property type="entry name" value="ASKHA_NBD_ANMK"/>
    <property type="match status" value="1"/>
</dbReference>
<dbReference type="Gene3D" id="3.30.420.40">
    <property type="match status" value="2"/>
</dbReference>
<dbReference type="HAMAP" id="MF_01270">
    <property type="entry name" value="AnhMurNAc_kinase"/>
    <property type="match status" value="1"/>
</dbReference>
<dbReference type="InterPro" id="IPR005338">
    <property type="entry name" value="Anhydro_N_Ac-Mur_kinase"/>
</dbReference>
<dbReference type="InterPro" id="IPR043129">
    <property type="entry name" value="ATPase_NBD"/>
</dbReference>
<dbReference type="NCBIfam" id="NF007142">
    <property type="entry name" value="PRK09585.2-1"/>
    <property type="match status" value="1"/>
</dbReference>
<dbReference type="NCBIfam" id="NF007148">
    <property type="entry name" value="PRK09585.3-2"/>
    <property type="match status" value="1"/>
</dbReference>
<dbReference type="PANTHER" id="PTHR30605">
    <property type="entry name" value="ANHYDRO-N-ACETYLMURAMIC ACID KINASE"/>
    <property type="match status" value="1"/>
</dbReference>
<dbReference type="PANTHER" id="PTHR30605:SF0">
    <property type="entry name" value="ANHYDRO-N-ACETYLMURAMIC ACID KINASE"/>
    <property type="match status" value="1"/>
</dbReference>
<dbReference type="Pfam" id="PF03702">
    <property type="entry name" value="AnmK"/>
    <property type="match status" value="1"/>
</dbReference>
<dbReference type="SUPFAM" id="SSF53067">
    <property type="entry name" value="Actin-like ATPase domain"/>
    <property type="match status" value="1"/>
</dbReference>
<evidence type="ECO:0000255" key="1">
    <source>
        <dbReference type="HAMAP-Rule" id="MF_01270"/>
    </source>
</evidence>
<protein>
    <recommendedName>
        <fullName evidence="1">Anhydro-N-acetylmuramic acid kinase</fullName>
        <ecNumber evidence="1">2.7.1.170</ecNumber>
    </recommendedName>
    <alternativeName>
        <fullName evidence="1">AnhMurNAc kinase</fullName>
    </alternativeName>
</protein>
<feature type="chain" id="PRO_0000249973" description="Anhydro-N-acetylmuramic acid kinase">
    <location>
        <begin position="1"/>
        <end position="382"/>
    </location>
</feature>
<feature type="binding site" evidence="1">
    <location>
        <begin position="9"/>
        <end position="16"/>
    </location>
    <ligand>
        <name>ATP</name>
        <dbReference type="ChEBI" id="CHEBI:30616"/>
    </ligand>
</feature>
<keyword id="KW-0067">ATP-binding</keyword>
<keyword id="KW-0119">Carbohydrate metabolism</keyword>
<keyword id="KW-0418">Kinase</keyword>
<keyword id="KW-0547">Nucleotide-binding</keyword>
<keyword id="KW-0808">Transferase</keyword>
<comment type="function">
    <text evidence="1">Catalyzes the specific phosphorylation of 1,6-anhydro-N-acetylmuramic acid (anhMurNAc) with the simultaneous cleavage of the 1,6-anhydro ring, generating MurNAc-6-P. Is required for the utilization of anhMurNAc either imported from the medium or derived from its own cell wall murein, and thus plays a role in cell wall recycling.</text>
</comment>
<comment type="catalytic activity">
    <reaction evidence="1">
        <text>1,6-anhydro-N-acetyl-beta-muramate + ATP + H2O = N-acetyl-D-muramate 6-phosphate + ADP + H(+)</text>
        <dbReference type="Rhea" id="RHEA:24952"/>
        <dbReference type="ChEBI" id="CHEBI:15377"/>
        <dbReference type="ChEBI" id="CHEBI:15378"/>
        <dbReference type="ChEBI" id="CHEBI:30616"/>
        <dbReference type="ChEBI" id="CHEBI:58690"/>
        <dbReference type="ChEBI" id="CHEBI:58722"/>
        <dbReference type="ChEBI" id="CHEBI:456216"/>
        <dbReference type="EC" id="2.7.1.170"/>
    </reaction>
</comment>
<comment type="pathway">
    <text evidence="1">Amino-sugar metabolism; 1,6-anhydro-N-acetylmuramate degradation.</text>
</comment>
<comment type="pathway">
    <text evidence="1">Cell wall biogenesis; peptidoglycan recycling.</text>
</comment>
<comment type="similarity">
    <text evidence="1">Belongs to the anhydro-N-acetylmuramic acid kinase family.</text>
</comment>
<name>ANMK_BACCZ</name>
<gene>
    <name evidence="1" type="primary">anmK</name>
    <name type="ordered locus">BCE33L2214</name>
</gene>
<reference key="1">
    <citation type="journal article" date="2006" name="J. Bacteriol.">
        <title>Pathogenomic sequence analysis of Bacillus cereus and Bacillus thuringiensis isolates closely related to Bacillus anthracis.</title>
        <authorList>
            <person name="Han C.S."/>
            <person name="Xie G."/>
            <person name="Challacombe J.F."/>
            <person name="Altherr M.R."/>
            <person name="Bhotika S.S."/>
            <person name="Bruce D."/>
            <person name="Campbell C.S."/>
            <person name="Campbell M.L."/>
            <person name="Chen J."/>
            <person name="Chertkov O."/>
            <person name="Cleland C."/>
            <person name="Dimitrijevic M."/>
            <person name="Doggett N.A."/>
            <person name="Fawcett J.J."/>
            <person name="Glavina T."/>
            <person name="Goodwin L.A."/>
            <person name="Hill K.K."/>
            <person name="Hitchcock P."/>
            <person name="Jackson P.J."/>
            <person name="Keim P."/>
            <person name="Kewalramani A.R."/>
            <person name="Longmire J."/>
            <person name="Lucas S."/>
            <person name="Malfatti S."/>
            <person name="McMurry K."/>
            <person name="Meincke L.J."/>
            <person name="Misra M."/>
            <person name="Moseman B.L."/>
            <person name="Mundt M."/>
            <person name="Munk A.C."/>
            <person name="Okinaka R.T."/>
            <person name="Parson-Quintana B."/>
            <person name="Reilly L.P."/>
            <person name="Richardson P."/>
            <person name="Robinson D.L."/>
            <person name="Rubin E."/>
            <person name="Saunders E."/>
            <person name="Tapia R."/>
            <person name="Tesmer J.G."/>
            <person name="Thayer N."/>
            <person name="Thompson L.S."/>
            <person name="Tice H."/>
            <person name="Ticknor L.O."/>
            <person name="Wills P.L."/>
            <person name="Brettin T.S."/>
            <person name="Gilna P."/>
        </authorList>
    </citation>
    <scope>NUCLEOTIDE SEQUENCE [LARGE SCALE GENOMIC DNA]</scope>
    <source>
        <strain>ZK / E33L</strain>
    </source>
</reference>
<accession>Q63BB2</accession>
<sequence>MYIAGVMSGTSLDGIDVALVRIEGSGVESKVELIHFTTVPFCNDIKSEIQQALSIENSNVQLICSLNFKLGLCFANAVKEVCKEANFSLEQLDLIGSHGQTIYHQPKQDGNRIPSTLQIGEPAVIAYETNTTVISNFRTMDMAAGGQGAPLVPYSEVILYRDPSKNRLLQNIGGISNVTVIPTQQSDQNVIAFDTGPGNMIIDEVCQRLFQLPYDQNGEIAKKGVVVDEILTYCMSHPFLKMNPPKSTGREQFGEEFVSELLKRFKKHSKENILTTVTMFTASSIVHHYKKFILPYYEIDEVILGGGGSYNSTLVEMLRNGLKDENCTIFIQEDIGYSSEAKEAIAFAILANETHHRNPSNVPSATGAKQSVVLGNVTFPPI</sequence>
<organism>
    <name type="scientific">Bacillus cereus (strain ZK / E33L)</name>
    <dbReference type="NCBI Taxonomy" id="288681"/>
    <lineage>
        <taxon>Bacteria</taxon>
        <taxon>Bacillati</taxon>
        <taxon>Bacillota</taxon>
        <taxon>Bacilli</taxon>
        <taxon>Bacillales</taxon>
        <taxon>Bacillaceae</taxon>
        <taxon>Bacillus</taxon>
        <taxon>Bacillus cereus group</taxon>
    </lineage>
</organism>
<proteinExistence type="inferred from homology"/>